<protein>
    <recommendedName>
        <fullName evidence="8">Sensor histidine kinase VxrA</fullName>
        <ecNumber evidence="1">2.7.13.3</ecNumber>
    </recommendedName>
    <alternativeName>
        <fullName evidence="7">Vibrio type six secretion regulator A</fullName>
    </alternativeName>
</protein>
<proteinExistence type="evidence at protein level"/>
<feature type="chain" id="PRO_5004328281" description="Sensor histidine kinase VxrA">
    <location>
        <begin position="1"/>
        <end position="499"/>
    </location>
</feature>
<feature type="topological domain" description="Cytoplasmic" evidence="9">
    <location>
        <begin position="1"/>
        <end position="12"/>
    </location>
</feature>
<feature type="transmembrane region" description="Helical" evidence="2">
    <location>
        <begin position="13"/>
        <end position="31"/>
    </location>
</feature>
<feature type="topological domain" description="Periplasmic" evidence="9">
    <location>
        <begin position="32"/>
        <end position="257"/>
    </location>
</feature>
<feature type="transmembrane region" description="Helical" evidence="2">
    <location>
        <begin position="258"/>
        <end position="280"/>
    </location>
</feature>
<feature type="topological domain" description="Cytoplasmic" evidence="9">
    <location>
        <begin position="281"/>
        <end position="499"/>
    </location>
</feature>
<feature type="domain" description="Histidine kinase" evidence="3">
    <location>
        <begin position="298"/>
        <end position="494"/>
    </location>
</feature>
<feature type="modified residue" description="Phosphohistidine; by autocatalysis" evidence="3">
    <location>
        <position position="301"/>
    </location>
</feature>
<feature type="disulfide bond" evidence="6 11 12 13 14 15">
    <location>
        <begin position="101"/>
        <end position="122"/>
    </location>
</feature>
<feature type="disulfide bond" evidence="6 11 12 13 14">
    <location>
        <begin position="241"/>
        <end position="249"/>
    </location>
</feature>
<feature type="mutagenesis site" description="No effect on vxrA expression. Does not affect survival following penicillin G treatment." evidence="6">
    <original>Y</original>
    <variation>A</variation>
    <location>
        <position position="95"/>
    </location>
</feature>
<feature type="mutagenesis site" description="1.7-fold decrease in vxrA expression and 4.9-fold reduction in survival following penicillin G treatment; when associated with A-122." evidence="6">
    <original>C</original>
    <variation>A</variation>
    <location>
        <position position="101"/>
    </location>
</feature>
<feature type="mutagenesis site" description="1.2-fold decrease in vxrA expression. 3.6-fold reduction in survival following penicillin G treatment." evidence="6">
    <original>F</original>
    <variation>A</variation>
    <location>
        <position position="117"/>
    </location>
</feature>
<feature type="mutagenesis site" description="1.7-fold decrease in vxrA expression and 4.9-fold reduction in survival following penicillin G treatment; when associated with A-101." evidence="6">
    <original>C</original>
    <variation>A</variation>
    <location>
        <position position="122"/>
    </location>
</feature>
<feature type="mutagenesis site" description="1.7-fold decrease in vxrA expression. 11.9-fold reduction in survival following penicillin G treatment." evidence="6">
    <original>H</original>
    <variation>A</variation>
    <location>
        <position position="139"/>
    </location>
</feature>
<feature type="mutagenesis site" description="1.3-fold decrease in vxrA expression. 6.3-fold reduction in survival following penicillin G treatment." evidence="6">
    <original>H</original>
    <variation>A</variation>
    <location>
        <position position="180"/>
    </location>
</feature>
<feature type="mutagenesis site" description="No effect on vxrA expression. Does not affect survival following penicillin G treatment." evidence="6">
    <original>D</original>
    <variation>A</variation>
    <location>
        <position position="204"/>
    </location>
</feature>
<feature type="mutagenesis site" description="1.5-fold decrease in vxrA expression and 9.2-fold reduction in survival following penicillin G treatment." evidence="6">
    <location>
        <begin position="238"/>
        <end position="240"/>
    </location>
</feature>
<feature type="mutagenesis site" description="No effect on vxrA expression. Does not affect survival following penicillin G treatment." evidence="6">
    <location>
        <begin position="239"/>
        <end position="240"/>
    </location>
</feature>
<feature type="mutagenesis site" description="1.7-fold decrease in vxrA expression and 2.5-fold reduction in survival following penicillin G treatment." evidence="6">
    <location>
        <position position="239"/>
    </location>
</feature>
<feature type="mutagenesis site" description="2.1-fold decrease in vxrA expression and 11.7-fold reduction in survival following penicillin G treatment; when associated with A-249." evidence="6">
    <original>C</original>
    <variation>A</variation>
    <location>
        <position position="241"/>
    </location>
</feature>
<feature type="mutagenesis site" description="2.1-fold decrease in vxrA expression and 11.7-fold reduction in survival following penicillin G treatment; when associated with A-241." evidence="6">
    <original>C</original>
    <variation>A</variation>
    <location>
        <position position="249"/>
    </location>
</feature>
<feature type="helix" evidence="18">
    <location>
        <begin position="37"/>
        <end position="39"/>
    </location>
</feature>
<feature type="helix" evidence="17">
    <location>
        <begin position="40"/>
        <end position="49"/>
    </location>
</feature>
<feature type="helix" evidence="17">
    <location>
        <begin position="53"/>
        <end position="55"/>
    </location>
</feature>
<feature type="strand" evidence="17">
    <location>
        <begin position="57"/>
        <end position="61"/>
    </location>
</feature>
<feature type="helix" evidence="17">
    <location>
        <begin position="62"/>
        <end position="68"/>
    </location>
</feature>
<feature type="helix" evidence="17">
    <location>
        <begin position="71"/>
        <end position="73"/>
    </location>
</feature>
<feature type="helix" evidence="17">
    <location>
        <begin position="76"/>
        <end position="79"/>
    </location>
</feature>
<feature type="helix" evidence="17">
    <location>
        <begin position="83"/>
        <end position="85"/>
    </location>
</feature>
<feature type="helix" evidence="17">
    <location>
        <begin position="88"/>
        <end position="100"/>
    </location>
</feature>
<feature type="strand" evidence="16">
    <location>
        <begin position="101"/>
        <end position="103"/>
    </location>
</feature>
<feature type="helix" evidence="17">
    <location>
        <begin position="109"/>
        <end position="111"/>
    </location>
</feature>
<feature type="helix" evidence="17">
    <location>
        <begin position="112"/>
        <end position="123"/>
    </location>
</feature>
<feature type="helix" evidence="17">
    <location>
        <begin position="129"/>
        <end position="133"/>
    </location>
</feature>
<feature type="strand" evidence="17">
    <location>
        <begin position="142"/>
        <end position="144"/>
    </location>
</feature>
<feature type="helix" evidence="17">
    <location>
        <begin position="145"/>
        <end position="152"/>
    </location>
</feature>
<feature type="helix" evidence="17">
    <location>
        <begin position="154"/>
        <end position="156"/>
    </location>
</feature>
<feature type="helix" evidence="17">
    <location>
        <begin position="157"/>
        <end position="160"/>
    </location>
</feature>
<feature type="helix" evidence="17">
    <location>
        <begin position="161"/>
        <end position="163"/>
    </location>
</feature>
<feature type="turn" evidence="17">
    <location>
        <begin position="166"/>
        <end position="168"/>
    </location>
</feature>
<feature type="helix" evidence="17">
    <location>
        <begin position="177"/>
        <end position="182"/>
    </location>
</feature>
<feature type="helix" evidence="17">
    <location>
        <begin position="186"/>
        <end position="193"/>
    </location>
</feature>
<feature type="strand" evidence="17">
    <location>
        <begin position="197"/>
        <end position="201"/>
    </location>
</feature>
<feature type="strand" evidence="17">
    <location>
        <begin position="204"/>
        <end position="209"/>
    </location>
</feature>
<feature type="strand" evidence="17">
    <location>
        <begin position="212"/>
        <end position="216"/>
    </location>
</feature>
<feature type="helix" evidence="17">
    <location>
        <begin position="218"/>
        <end position="227"/>
    </location>
</feature>
<feature type="strand" evidence="17">
    <location>
        <begin position="230"/>
        <end position="234"/>
    </location>
</feature>
<feature type="strand" evidence="18">
    <location>
        <begin position="236"/>
        <end position="238"/>
    </location>
</feature>
<feature type="strand" evidence="17">
    <location>
        <begin position="242"/>
        <end position="245"/>
    </location>
</feature>
<feature type="strand" evidence="17">
    <location>
        <begin position="248"/>
        <end position="252"/>
    </location>
</feature>
<reference key="1">
    <citation type="journal article" date="2000" name="Nature">
        <title>DNA sequence of both chromosomes of the cholera pathogen Vibrio cholerae.</title>
        <authorList>
            <person name="Heidelberg J.F."/>
            <person name="Eisen J.A."/>
            <person name="Nelson W.C."/>
            <person name="Clayton R.A."/>
            <person name="Gwinn M.L."/>
            <person name="Dodson R.J."/>
            <person name="Haft D.H."/>
            <person name="Hickey E.K."/>
            <person name="Peterson J.D."/>
            <person name="Umayam L.A."/>
            <person name="Gill S.R."/>
            <person name="Nelson K.E."/>
            <person name="Read T.D."/>
            <person name="Tettelin H."/>
            <person name="Richardson D.L."/>
            <person name="Ermolaeva M.D."/>
            <person name="Vamathevan J.J."/>
            <person name="Bass S."/>
            <person name="Qin H."/>
            <person name="Dragoi I."/>
            <person name="Sellers P."/>
            <person name="McDonald L.A."/>
            <person name="Utterback T.R."/>
            <person name="Fleischmann R.D."/>
            <person name="Nierman W.C."/>
            <person name="White O."/>
            <person name="Salzberg S.L."/>
            <person name="Smith H.O."/>
            <person name="Colwell R.R."/>
            <person name="Mekalanos J.J."/>
            <person name="Venter J.C."/>
            <person name="Fraser C.M."/>
        </authorList>
    </citation>
    <scope>NUCLEOTIDE SEQUENCE [LARGE SCALE GENOMIC DNA]</scope>
    <source>
        <strain>ATCC 39315 / El Tor Inaba N16961</strain>
    </source>
</reference>
<reference key="2">
    <citation type="journal article" date="2015" name="PLoS Pathog.">
        <title>Vibrio cholerae Response Regulator VxrB Controls Colonization and Regulates the Type VI Secretion System.</title>
        <authorList>
            <person name="Cheng A.T."/>
            <person name="Ottemann K.M."/>
            <person name="Yildiz F.H."/>
        </authorList>
    </citation>
    <scope>FUNCTION IN REGULATION OF T6SS AND VIRULENCE</scope>
    <scope>DISRUPTION PHENOTYPE</scope>
    <source>
        <strain>El Tor A1552 / Serotype O1</strain>
    </source>
</reference>
<reference key="3">
    <citation type="journal article" date="2017" name="J. Bacteriol.">
        <title>The Two-Component Signal Transduction System VxrAB Positively Regulates Vibrio cholerae Biofilm Formation.</title>
        <authorList>
            <person name="Teschler J.K."/>
            <person name="Cheng A.T."/>
            <person name="Yildiz F.H."/>
        </authorList>
    </citation>
    <scope>FUNCTION IN REGULATION OF BIOFILM FORMATION</scope>
    <scope>DISRUPTION PHENOTYPE</scope>
    <source>
        <strain>El Tor A1552 / Serotype O1</strain>
    </source>
</reference>
<reference evidence="11 12 13 14 15" key="4">
    <citation type="journal article" date="2021" name="J. Bacteriol.">
        <title>Sensor Domain of Histidine Kinase VxrA of Vibrio cholerae- A Hairpin-swapped Dimer and its Conformational Change.</title>
        <authorList>
            <person name="Tan K."/>
            <person name="Teschler J.K."/>
            <person name="Wu R."/>
            <person name="Jedrzejczak R.P."/>
            <person name="Zhou M."/>
            <person name="Shuvalova L.A."/>
            <person name="Endres M.J."/>
            <person name="Welk L.F."/>
            <person name="Kwon K."/>
            <person name="Anderson W.F."/>
            <person name="Satchell K.J.F."/>
            <person name="Yildiz F.H."/>
            <person name="Joachimiak A."/>
        </authorList>
    </citation>
    <scope>X-RAY CRYSTALLOGRAPHY (1.98 ANGSTROMS) OF 38-256 OF WILD-TYPE AND DELETION MUTANTS</scope>
    <scope>FUNCTION</scope>
    <scope>SUBUNIT</scope>
    <scope>SUBCELLULAR LOCATION</scope>
    <scope>INDUCTION</scope>
    <scope>DOMAIN</scope>
    <scope>DISULFIDE BONDS</scope>
    <scope>DISRUPTION PHENOTYPE</scope>
    <scope>MUTAGENESIS OF TYR-95; CYS-101; PHE-117; CYS-122; HIS-139; HIS-180; ASP-204; 238-ASP--THR-240; 239-ASN-THR-240; ASN-239; CYS-241 AND CYS-249</scope>
    <source>
        <strain>ATCC 39315 / El Tor Inaba N16961</strain>
    </source>
</reference>
<comment type="function">
    <text evidence="1 4 5 6">Member of the two-component regulatory system VxrB/VxrA involved in the regulation of diverses processes, including virulence, the type VI secretion system (T6SS) and biofilm formation (PubMed:26000450, PubMed:28607158, PubMed:33753465). Functions as a sensor protein kinase which is autophosphorylated at a histidine residue and transfers its phosphate group to the conserved aspartic acid residue in the regulatory domain of VxrB (By similarity). Is critical for colonization in the infant mouse model (PubMed:26000450). Contributes to the resistance to beta-lactam treatment (PubMed:33753465).</text>
</comment>
<comment type="catalytic activity">
    <reaction evidence="1">
        <text>ATP + protein L-histidine = ADP + protein N-phospho-L-histidine.</text>
        <dbReference type="EC" id="2.7.13.3"/>
    </reaction>
</comment>
<comment type="subunit">
    <text evidence="6">Homodimer.</text>
</comment>
<comment type="subcellular location">
    <subcellularLocation>
        <location evidence="6">Cell inner membrane</location>
        <topology evidence="9">Multi-pass membrane protein</topology>
    </subcellularLocation>
</comment>
<comment type="induction">
    <text evidence="6">The Vxr system positively regulates its expression.</text>
</comment>
<comment type="domain">
    <text evidence="6">Contains a unique periplasmic sensor domain (SD) and lacks a cytoplasmic linker domain between the second transmembrane helix and the dimerization and histidine phosphotransfer (DHp) domain, indicating that this system may utilize a potentially unique signal sensing and transmission mechanism (PubMed:33753465). Detection of the signal via the periplasmic sensor region may induce conformational changes of the dimer and close the transmembrane helices TM1 and TM2 and subsequently the cytoplasmic DHp domains in a scissor-like mechanism, which changes the activation status of kinase domains (PubMed:33753465).</text>
</comment>
<comment type="PTM">
    <text evidence="1 6">Autophosphorylated (By similarity). Contains two disulfide bonds that may play a role in the stability of the protein (PubMed:33753465). However, the disulfide bonds are not absolutely essential, as some activity and growth are detected in the absence of each disulfide bond (PubMed:33753465).</text>
</comment>
<comment type="disruption phenotype">
    <text evidence="4 5 6">Mutants lacking this gene display a significant colonization defect in an infant mouse intestine colonization assay (PubMed:26000450). Mutants show a decrease in vpsL expression and are deficient in biofilm formation (PubMed:28607158). Deletion of the gene results in a 4.4-fold reduction in vxrA expression and a 134.8-fold reduction in survival following penicillin G treatment compared to those of the wild type (PubMed:33753465).</text>
</comment>
<gene>
    <name evidence="7" type="primary">vxrA</name>
    <name evidence="10" type="ordered locus">VC_A0565</name>
</gene>
<organism>
    <name type="scientific">Vibrio cholerae serotype O1 (strain ATCC 39315 / El Tor Inaba N16961)</name>
    <dbReference type="NCBI Taxonomy" id="243277"/>
    <lineage>
        <taxon>Bacteria</taxon>
        <taxon>Pseudomonadati</taxon>
        <taxon>Pseudomonadota</taxon>
        <taxon>Gammaproteobacteria</taxon>
        <taxon>Vibrionales</taxon>
        <taxon>Vibrionaceae</taxon>
        <taxon>Vibrio</taxon>
    </lineage>
</organism>
<name>VXRA_VIBCH</name>
<dbReference type="EC" id="2.7.13.3" evidence="1"/>
<dbReference type="EMBL" id="AE003853">
    <property type="protein sequence ID" value="AAF96467.1"/>
    <property type="molecule type" value="Genomic_DNA"/>
</dbReference>
<dbReference type="PIR" id="F82444">
    <property type="entry name" value="F82444"/>
</dbReference>
<dbReference type="RefSeq" id="NP_232955.1">
    <property type="nucleotide sequence ID" value="NC_002506.1"/>
</dbReference>
<dbReference type="PDB" id="4R7Q">
    <property type="method" value="X-ray"/>
    <property type="resolution" value="1.98 A"/>
    <property type="chains" value="A=38-256"/>
</dbReference>
<dbReference type="PDB" id="7KB3">
    <property type="method" value="X-ray"/>
    <property type="resolution" value="2.25 A"/>
    <property type="chains" value="A/B/C/D=38-256"/>
</dbReference>
<dbReference type="PDB" id="7KB7">
    <property type="method" value="X-ray"/>
    <property type="resolution" value="2.20 A"/>
    <property type="chains" value="A=38-256"/>
</dbReference>
<dbReference type="PDB" id="7KB9">
    <property type="method" value="X-ray"/>
    <property type="resolution" value="1.98 A"/>
    <property type="chains" value="A/B=38-256"/>
</dbReference>
<dbReference type="PDB" id="7LA6">
    <property type="method" value="X-ray"/>
    <property type="resolution" value="1.98 A"/>
    <property type="chains" value="A=37-256"/>
</dbReference>
<dbReference type="PDBsum" id="4R7Q"/>
<dbReference type="PDBsum" id="7KB3"/>
<dbReference type="PDBsum" id="7KB7"/>
<dbReference type="PDBsum" id="7KB9"/>
<dbReference type="PDBsum" id="7LA6"/>
<dbReference type="SMR" id="Q9KM24"/>
<dbReference type="STRING" id="243277.VC_A0565"/>
<dbReference type="DNASU" id="2612861"/>
<dbReference type="EnsemblBacteria" id="AAF96467">
    <property type="protein sequence ID" value="AAF96467"/>
    <property type="gene ID" value="VC_A0565"/>
</dbReference>
<dbReference type="KEGG" id="vch:VC_A0565"/>
<dbReference type="PATRIC" id="fig|243277.26.peg.3192"/>
<dbReference type="eggNOG" id="COG0642">
    <property type="taxonomic scope" value="Bacteria"/>
</dbReference>
<dbReference type="HOGENOM" id="CLU_043538_0_0_6"/>
<dbReference type="EvolutionaryTrace" id="Q9KM24"/>
<dbReference type="Proteomes" id="UP000000584">
    <property type="component" value="Chromosome 2"/>
</dbReference>
<dbReference type="GO" id="GO:0005886">
    <property type="term" value="C:plasma membrane"/>
    <property type="evidence" value="ECO:0007669"/>
    <property type="project" value="UniProtKB-SubCell"/>
</dbReference>
<dbReference type="GO" id="GO:0000155">
    <property type="term" value="F:phosphorelay sensor kinase activity"/>
    <property type="evidence" value="ECO:0007669"/>
    <property type="project" value="InterPro"/>
</dbReference>
<dbReference type="CDD" id="cd00082">
    <property type="entry name" value="HisKA"/>
    <property type="match status" value="1"/>
</dbReference>
<dbReference type="Gene3D" id="3.30.565.10">
    <property type="entry name" value="Histidine kinase-like ATPase, C-terminal domain"/>
    <property type="match status" value="1"/>
</dbReference>
<dbReference type="InterPro" id="IPR050980">
    <property type="entry name" value="2C_sensor_his_kinase"/>
</dbReference>
<dbReference type="InterPro" id="IPR036890">
    <property type="entry name" value="HATPase_C_sf"/>
</dbReference>
<dbReference type="InterPro" id="IPR005467">
    <property type="entry name" value="His_kinase_dom"/>
</dbReference>
<dbReference type="InterPro" id="IPR003661">
    <property type="entry name" value="HisK_dim/P_dom"/>
</dbReference>
<dbReference type="InterPro" id="IPR036097">
    <property type="entry name" value="HisK_dim/P_sf"/>
</dbReference>
<dbReference type="InterPro" id="IPR049705">
    <property type="entry name" value="VxrA-like"/>
</dbReference>
<dbReference type="InterPro" id="IPR021821">
    <property type="entry name" value="VxrA_SD"/>
</dbReference>
<dbReference type="NCBIfam" id="NF041841">
    <property type="entry name" value="his_kin_VxrA"/>
    <property type="match status" value="1"/>
</dbReference>
<dbReference type="PANTHER" id="PTHR44936">
    <property type="entry name" value="SENSOR PROTEIN CREC"/>
    <property type="match status" value="1"/>
</dbReference>
<dbReference type="PANTHER" id="PTHR44936:SF9">
    <property type="entry name" value="SENSOR PROTEIN CREC"/>
    <property type="match status" value="1"/>
</dbReference>
<dbReference type="Pfam" id="PF11884">
    <property type="entry name" value="DUF3404"/>
    <property type="match status" value="1"/>
</dbReference>
<dbReference type="Pfam" id="PF02518">
    <property type="entry name" value="HATPase_c"/>
    <property type="match status" value="1"/>
</dbReference>
<dbReference type="Pfam" id="PF00512">
    <property type="entry name" value="HisKA"/>
    <property type="match status" value="1"/>
</dbReference>
<dbReference type="SMART" id="SM00387">
    <property type="entry name" value="HATPase_c"/>
    <property type="match status" value="1"/>
</dbReference>
<dbReference type="SMART" id="SM00388">
    <property type="entry name" value="HisKA"/>
    <property type="match status" value="1"/>
</dbReference>
<dbReference type="SUPFAM" id="SSF55874">
    <property type="entry name" value="ATPase domain of HSP90 chaperone/DNA topoisomerase II/histidine kinase"/>
    <property type="match status" value="1"/>
</dbReference>
<dbReference type="SUPFAM" id="SSF47384">
    <property type="entry name" value="Homodimeric domain of signal transducing histidine kinase"/>
    <property type="match status" value="1"/>
</dbReference>
<dbReference type="PROSITE" id="PS50109">
    <property type="entry name" value="HIS_KIN"/>
    <property type="match status" value="1"/>
</dbReference>
<accession>Q9KM24</accession>
<evidence type="ECO:0000250" key="1">
    <source>
        <dbReference type="UniProtKB" id="O24972"/>
    </source>
</evidence>
<evidence type="ECO:0000255" key="2"/>
<evidence type="ECO:0000255" key="3">
    <source>
        <dbReference type="PROSITE-ProRule" id="PRU00107"/>
    </source>
</evidence>
<evidence type="ECO:0000269" key="4">
    <source>
    </source>
</evidence>
<evidence type="ECO:0000269" key="5">
    <source>
    </source>
</evidence>
<evidence type="ECO:0000269" key="6">
    <source>
    </source>
</evidence>
<evidence type="ECO:0000303" key="7">
    <source>
    </source>
</evidence>
<evidence type="ECO:0000305" key="8"/>
<evidence type="ECO:0000305" key="9">
    <source>
    </source>
</evidence>
<evidence type="ECO:0000312" key="10">
    <source>
        <dbReference type="EMBL" id="AAF96467.1"/>
    </source>
</evidence>
<evidence type="ECO:0007744" key="11">
    <source>
        <dbReference type="PDB" id="4R7Q"/>
    </source>
</evidence>
<evidence type="ECO:0007744" key="12">
    <source>
        <dbReference type="PDB" id="7KB3"/>
    </source>
</evidence>
<evidence type="ECO:0007744" key="13">
    <source>
        <dbReference type="PDB" id="7KB7"/>
    </source>
</evidence>
<evidence type="ECO:0007744" key="14">
    <source>
        <dbReference type="PDB" id="7KB9"/>
    </source>
</evidence>
<evidence type="ECO:0007744" key="15">
    <source>
        <dbReference type="PDB" id="7LA6"/>
    </source>
</evidence>
<evidence type="ECO:0007829" key="16">
    <source>
        <dbReference type="PDB" id="7KB7"/>
    </source>
</evidence>
<evidence type="ECO:0007829" key="17">
    <source>
        <dbReference type="PDB" id="7KB9"/>
    </source>
</evidence>
<evidence type="ECO:0007829" key="18">
    <source>
        <dbReference type="PDB" id="7LA6"/>
    </source>
</evidence>
<keyword id="KW-0002">3D-structure</keyword>
<keyword id="KW-0997">Cell inner membrane</keyword>
<keyword id="KW-1003">Cell membrane</keyword>
<keyword id="KW-1015">Disulfide bond</keyword>
<keyword id="KW-0418">Kinase</keyword>
<keyword id="KW-0472">Membrane</keyword>
<keyword id="KW-0597">Phosphoprotein</keyword>
<keyword id="KW-1185">Reference proteome</keyword>
<keyword id="KW-0808">Transferase</keyword>
<keyword id="KW-0812">Transmembrane</keyword>
<keyword id="KW-1133">Transmembrane helix</keyword>
<keyword id="KW-0902">Two-component regulatory system</keyword>
<sequence length="499" mass="56577">MRYSFCMLEKTNIPLIRALNLTLVSLCFAMLPNPVHADSLPERIDLFVSLFDYNSATTSYDIRSIQTDFPTRLLTPDSMLPQTSEYPLKDIQLLYKLAQSCTGKLPLSPLITEPLVFTRSLCKGSSLSPRWFARSGLIHPGGGTYAFRYAEKYPAQFANLLPYMHIQERPNAAEGTLLYHLQNMGEDAINALVSGASMFGSGSDLWLRKGDIYYLFNEETWLTNANKAGLSYSLLSADNTCFIQRGNICWDVEDHSDLLRTSMIILVIANIFLVLGWSGYRWNSKRQEMRSRMLILQILTHELRTPIASLSLTVEGFRREFEHLPESLYDEFRRLCEDSRRLRQLAEASKDYLQSDSKPLASDWVPSVEEWLQYKVEEEFSGNVTLKLNQDIAAKLNVYWLGTCVDNLLRNAVKYGVAPVTLEVITQTNLVTFKVTDQGSLTHRDWRHLRKPFVSKSGLGLGLTIVESMVGRMGGKMSLEGPPTTFILEIPCETDTASR</sequence>